<accession>Q48GL0</accession>
<feature type="chain" id="PRO_0000271941" description="Cytochrome c biogenesis ATP-binding export protein CcmA">
    <location>
        <begin position="1"/>
        <end position="213"/>
    </location>
</feature>
<feature type="domain" description="ABC transporter" evidence="1">
    <location>
        <begin position="8"/>
        <end position="213"/>
    </location>
</feature>
<feature type="binding site" evidence="1">
    <location>
        <begin position="40"/>
        <end position="47"/>
    </location>
    <ligand>
        <name>ATP</name>
        <dbReference type="ChEBI" id="CHEBI:30616"/>
    </ligand>
</feature>
<comment type="function">
    <text evidence="1">Part of the ABC transporter complex CcmAB involved in the biogenesis of c-type cytochromes; once thought to export heme, this seems not to be the case, but its exact role is uncertain. Responsible for energy coupling to the transport system.</text>
</comment>
<comment type="catalytic activity">
    <reaction evidence="1">
        <text>heme b(in) + ATP + H2O = heme b(out) + ADP + phosphate + H(+)</text>
        <dbReference type="Rhea" id="RHEA:19261"/>
        <dbReference type="ChEBI" id="CHEBI:15377"/>
        <dbReference type="ChEBI" id="CHEBI:15378"/>
        <dbReference type="ChEBI" id="CHEBI:30616"/>
        <dbReference type="ChEBI" id="CHEBI:43474"/>
        <dbReference type="ChEBI" id="CHEBI:60344"/>
        <dbReference type="ChEBI" id="CHEBI:456216"/>
        <dbReference type="EC" id="7.6.2.5"/>
    </reaction>
</comment>
<comment type="subunit">
    <text evidence="1">The complex is composed of two ATP-binding proteins (CcmA) and two transmembrane proteins (CcmB).</text>
</comment>
<comment type="subcellular location">
    <subcellularLocation>
        <location evidence="1">Cell inner membrane</location>
        <topology evidence="1">Peripheral membrane protein</topology>
    </subcellularLocation>
</comment>
<comment type="similarity">
    <text evidence="1">Belongs to the ABC transporter superfamily. CcmA exporter (TC 3.A.1.107) family.</text>
</comment>
<comment type="sequence caution" evidence="2">
    <conflict type="erroneous initiation">
        <sequence resource="EMBL-CDS" id="AAZ34848"/>
    </conflict>
</comment>
<evidence type="ECO:0000255" key="1">
    <source>
        <dbReference type="HAMAP-Rule" id="MF_01707"/>
    </source>
</evidence>
<evidence type="ECO:0000305" key="2"/>
<keyword id="KW-0067">ATP-binding</keyword>
<keyword id="KW-0997">Cell inner membrane</keyword>
<keyword id="KW-1003">Cell membrane</keyword>
<keyword id="KW-0201">Cytochrome c-type biogenesis</keyword>
<keyword id="KW-0472">Membrane</keyword>
<keyword id="KW-0547">Nucleotide-binding</keyword>
<keyword id="KW-1278">Translocase</keyword>
<keyword id="KW-0813">Transport</keyword>
<reference key="1">
    <citation type="journal article" date="2005" name="J. Bacteriol.">
        <title>Whole-genome sequence analysis of Pseudomonas syringae pv. phaseolicola 1448A reveals divergence among pathovars in genes involved in virulence and transposition.</title>
        <authorList>
            <person name="Joardar V."/>
            <person name="Lindeberg M."/>
            <person name="Jackson R.W."/>
            <person name="Selengut J."/>
            <person name="Dodson R."/>
            <person name="Brinkac L.M."/>
            <person name="Daugherty S.C."/>
            <person name="DeBoy R.T."/>
            <person name="Durkin A.S."/>
            <person name="Gwinn Giglio M."/>
            <person name="Madupu R."/>
            <person name="Nelson W.C."/>
            <person name="Rosovitz M.J."/>
            <person name="Sullivan S.A."/>
            <person name="Crabtree J."/>
            <person name="Creasy T."/>
            <person name="Davidsen T.M."/>
            <person name="Haft D.H."/>
            <person name="Zafar N."/>
            <person name="Zhou L."/>
            <person name="Halpin R."/>
            <person name="Holley T."/>
            <person name="Khouri H.M."/>
            <person name="Feldblyum T.V."/>
            <person name="White O."/>
            <person name="Fraser C.M."/>
            <person name="Chatterjee A.K."/>
            <person name="Cartinhour S."/>
            <person name="Schneider D."/>
            <person name="Mansfield J.W."/>
            <person name="Collmer A."/>
            <person name="Buell R."/>
        </authorList>
    </citation>
    <scope>NUCLEOTIDE SEQUENCE [LARGE SCALE GENOMIC DNA]</scope>
    <source>
        <strain>1448A / Race 6</strain>
    </source>
</reference>
<gene>
    <name evidence="1" type="primary">ccmA</name>
    <name type="ordered locus">PSPPH_3314</name>
</gene>
<organism>
    <name type="scientific">Pseudomonas savastanoi pv. phaseolicola (strain 1448A / Race 6)</name>
    <name type="common">Pseudomonas syringae pv. phaseolicola (strain 1448A / Race 6)</name>
    <dbReference type="NCBI Taxonomy" id="264730"/>
    <lineage>
        <taxon>Bacteria</taxon>
        <taxon>Pseudomonadati</taxon>
        <taxon>Pseudomonadota</taxon>
        <taxon>Gammaproteobacteria</taxon>
        <taxon>Pseudomonadales</taxon>
        <taxon>Pseudomonadaceae</taxon>
        <taxon>Pseudomonas</taxon>
    </lineage>
</organism>
<dbReference type="EC" id="7.6.2.5" evidence="1"/>
<dbReference type="EMBL" id="CP000058">
    <property type="protein sequence ID" value="AAZ34848.1"/>
    <property type="status" value="ALT_INIT"/>
    <property type="molecule type" value="Genomic_DNA"/>
</dbReference>
<dbReference type="RefSeq" id="WP_011169058.1">
    <property type="nucleotide sequence ID" value="NC_005773.3"/>
</dbReference>
<dbReference type="SMR" id="Q48GL0"/>
<dbReference type="GeneID" id="61870810"/>
<dbReference type="KEGG" id="psp:PSPPH_3314"/>
<dbReference type="eggNOG" id="COG4133">
    <property type="taxonomic scope" value="Bacteria"/>
</dbReference>
<dbReference type="HOGENOM" id="CLU_000604_1_2_6"/>
<dbReference type="Proteomes" id="UP000000551">
    <property type="component" value="Chromosome"/>
</dbReference>
<dbReference type="GO" id="GO:0005886">
    <property type="term" value="C:plasma membrane"/>
    <property type="evidence" value="ECO:0007669"/>
    <property type="project" value="UniProtKB-SubCell"/>
</dbReference>
<dbReference type="GO" id="GO:0015439">
    <property type="term" value="F:ABC-type heme transporter activity"/>
    <property type="evidence" value="ECO:0007669"/>
    <property type="project" value="UniProtKB-EC"/>
</dbReference>
<dbReference type="GO" id="GO:0005524">
    <property type="term" value="F:ATP binding"/>
    <property type="evidence" value="ECO:0007669"/>
    <property type="project" value="UniProtKB-KW"/>
</dbReference>
<dbReference type="GO" id="GO:0016887">
    <property type="term" value="F:ATP hydrolysis activity"/>
    <property type="evidence" value="ECO:0007669"/>
    <property type="project" value="InterPro"/>
</dbReference>
<dbReference type="GO" id="GO:0017004">
    <property type="term" value="P:cytochrome complex assembly"/>
    <property type="evidence" value="ECO:0007669"/>
    <property type="project" value="UniProtKB-KW"/>
</dbReference>
<dbReference type="CDD" id="cd03231">
    <property type="entry name" value="ABC_CcmA_heme_exporter"/>
    <property type="match status" value="1"/>
</dbReference>
<dbReference type="Gene3D" id="3.40.50.300">
    <property type="entry name" value="P-loop containing nucleotide triphosphate hydrolases"/>
    <property type="match status" value="1"/>
</dbReference>
<dbReference type="InterPro" id="IPR003593">
    <property type="entry name" value="AAA+_ATPase"/>
</dbReference>
<dbReference type="InterPro" id="IPR003439">
    <property type="entry name" value="ABC_transporter-like_ATP-bd"/>
</dbReference>
<dbReference type="InterPro" id="IPR017871">
    <property type="entry name" value="ABC_transporter-like_CS"/>
</dbReference>
<dbReference type="InterPro" id="IPR005895">
    <property type="entry name" value="ABC_transptr_haem_export_CcmA"/>
</dbReference>
<dbReference type="InterPro" id="IPR027417">
    <property type="entry name" value="P-loop_NTPase"/>
</dbReference>
<dbReference type="NCBIfam" id="TIGR01189">
    <property type="entry name" value="ccmA"/>
    <property type="match status" value="1"/>
</dbReference>
<dbReference type="NCBIfam" id="NF010061">
    <property type="entry name" value="PRK13538.1"/>
    <property type="match status" value="1"/>
</dbReference>
<dbReference type="PANTHER" id="PTHR43499">
    <property type="entry name" value="ABC TRANSPORTER I FAMILY MEMBER 1"/>
    <property type="match status" value="1"/>
</dbReference>
<dbReference type="PANTHER" id="PTHR43499:SF1">
    <property type="entry name" value="ABC TRANSPORTER I FAMILY MEMBER 1"/>
    <property type="match status" value="1"/>
</dbReference>
<dbReference type="Pfam" id="PF00005">
    <property type="entry name" value="ABC_tran"/>
    <property type="match status" value="1"/>
</dbReference>
<dbReference type="SMART" id="SM00382">
    <property type="entry name" value="AAA"/>
    <property type="match status" value="1"/>
</dbReference>
<dbReference type="SUPFAM" id="SSF52540">
    <property type="entry name" value="P-loop containing nucleoside triphosphate hydrolases"/>
    <property type="match status" value="1"/>
</dbReference>
<dbReference type="PROSITE" id="PS00211">
    <property type="entry name" value="ABC_TRANSPORTER_1"/>
    <property type="match status" value="1"/>
</dbReference>
<dbReference type="PROSITE" id="PS50893">
    <property type="entry name" value="ABC_TRANSPORTER_2"/>
    <property type="match status" value="1"/>
</dbReference>
<dbReference type="PROSITE" id="PS51243">
    <property type="entry name" value="CCMA"/>
    <property type="match status" value="1"/>
</dbReference>
<protein>
    <recommendedName>
        <fullName evidence="1">Cytochrome c biogenesis ATP-binding export protein CcmA</fullName>
        <ecNumber evidence="1">7.6.2.5</ecNumber>
    </recommendedName>
    <alternativeName>
        <fullName evidence="1">Heme exporter protein A</fullName>
    </alternativeName>
</protein>
<name>CCMA_PSE14</name>
<sequence>MIPAPPFLQATALTCERDGRMLFENLDLQVRTGDMLQVSGPNGSGKTSLLRLLCGLMQPTAGHVLLNGQPAGRQPTAPGLNLLWVGHASALKDLLTPLENLSWLCALHHPADADAIFNALDAVGLAGFEDVPCHTLSAGQQRRVALARLYLPGPPLWLLDEPFTALDRQGIAQLENHLAGHCEKGGMIIMTTHHTLSRLPAGYRDIDLGQWAA</sequence>
<proteinExistence type="inferred from homology"/>